<reference key="1">
    <citation type="journal article" date="2009" name="Physiol. Plantarum">
        <title>The presence of sinapyl lignin in Ginkgo biloba cell cultures changes our views of the evolution of lignin biosynthesis.</title>
        <authorList>
            <person name="Novo Uzal E."/>
            <person name="Gomez Ros L.V."/>
            <person name="Pomar F."/>
            <person name="Bernal M.A."/>
            <person name="Paradela A."/>
            <person name="Albar J.P."/>
            <person name="Ros Barcelo A."/>
        </authorList>
    </citation>
    <scope>PROTEIN SEQUENCE</scope>
    <source>
        <strain>PC-650</strain>
        <tissue>Callus</tissue>
    </source>
</reference>
<name>UP12_GINBI</name>
<organism>
    <name type="scientific">Ginkgo biloba</name>
    <name type="common">Ginkgo</name>
    <name type="synonym">Maidenhair tree</name>
    <dbReference type="NCBI Taxonomy" id="3311"/>
    <lineage>
        <taxon>Eukaryota</taxon>
        <taxon>Viridiplantae</taxon>
        <taxon>Streptophyta</taxon>
        <taxon>Embryophyta</taxon>
        <taxon>Tracheophyta</taxon>
        <taxon>Spermatophyta</taxon>
        <taxon>Ginkgoidae</taxon>
        <taxon>Ginkgoales</taxon>
        <taxon>Ginkgoaceae</taxon>
        <taxon>Ginkgo</taxon>
    </lineage>
</organism>
<accession>P85425</accession>
<proteinExistence type="evidence at protein level"/>
<protein>
    <recommendedName>
        <fullName>Unknown protein 12</fullName>
    </recommendedName>
</protein>
<sequence>AVGNEVFANR</sequence>
<feature type="chain" id="PRO_0000341525" description="Unknown protein 12">
    <location>
        <begin position="1" status="less than"/>
        <end position="10" status="greater than"/>
    </location>
</feature>
<feature type="unsure residue" description="F or M">
    <location>
        <position position="7"/>
    </location>
</feature>
<feature type="non-terminal residue">
    <location>
        <position position="1"/>
    </location>
</feature>
<feature type="non-terminal residue">
    <location>
        <position position="10"/>
    </location>
</feature>
<keyword id="KW-0903">Direct protein sequencing</keyword>